<organism>
    <name type="scientific">Mus musculus</name>
    <name type="common">Mouse</name>
    <dbReference type="NCBI Taxonomy" id="10090"/>
    <lineage>
        <taxon>Eukaryota</taxon>
        <taxon>Metazoa</taxon>
        <taxon>Chordata</taxon>
        <taxon>Craniata</taxon>
        <taxon>Vertebrata</taxon>
        <taxon>Euteleostomi</taxon>
        <taxon>Mammalia</taxon>
        <taxon>Eutheria</taxon>
        <taxon>Euarchontoglires</taxon>
        <taxon>Glires</taxon>
        <taxon>Rodentia</taxon>
        <taxon>Myomorpha</taxon>
        <taxon>Muroidea</taxon>
        <taxon>Muridae</taxon>
        <taxon>Murinae</taxon>
        <taxon>Mus</taxon>
        <taxon>Mus</taxon>
    </lineage>
</organism>
<reference key="1">
    <citation type="journal article" date="1994" name="Biochemistry">
        <title>Induction of a new metallothionein isoform (MT-IV) occurs during differentiation of stratified squamous epithelia.</title>
        <authorList>
            <person name="Quaife C.J."/>
            <person name="Findley S.D."/>
            <person name="Erickson J.C."/>
            <person name="Froelick G.J."/>
            <person name="Kelly E.J."/>
            <person name="Zambrowicz B.P."/>
            <person name="Palmiter R.D."/>
        </authorList>
    </citation>
    <scope>NUCLEOTIDE SEQUENCE [GENOMIC DNA]</scope>
    <source>
        <strain>C57BL/6J</strain>
    </source>
</reference>
<protein>
    <recommendedName>
        <fullName>Metallothionein-4</fullName>
        <shortName>MT-4</shortName>
    </recommendedName>
    <alternativeName>
        <fullName>Metallothionein-IV</fullName>
        <shortName>MT-IV</shortName>
    </alternativeName>
</protein>
<gene>
    <name type="primary">Mt4</name>
</gene>
<proteinExistence type="evidence at transcript level"/>
<evidence type="ECO:0000250" key="1">
    <source>
        <dbReference type="UniProtKB" id="P02795"/>
    </source>
</evidence>
<evidence type="ECO:0000305" key="2"/>
<dbReference type="EMBL" id="U07808">
    <property type="protein sequence ID" value="AAA20233.1"/>
    <property type="molecule type" value="Genomic_DNA"/>
</dbReference>
<dbReference type="CCDS" id="CCDS40435.1"/>
<dbReference type="PIR" id="B53640">
    <property type="entry name" value="B53640"/>
</dbReference>
<dbReference type="RefSeq" id="NP_032657.1">
    <property type="nucleotide sequence ID" value="NM_008631.3"/>
</dbReference>
<dbReference type="SMR" id="P47945"/>
<dbReference type="FunCoup" id="P47945">
    <property type="interactions" value="299"/>
</dbReference>
<dbReference type="STRING" id="10090.ENSMUSP00000034207"/>
<dbReference type="PaxDb" id="10090-ENSMUSP00000034207"/>
<dbReference type="ProteomicsDB" id="291428"/>
<dbReference type="Antibodypedia" id="76693">
    <property type="antibodies" value="27 antibodies from 5 providers"/>
</dbReference>
<dbReference type="Ensembl" id="ENSMUST00000034207.8">
    <property type="protein sequence ID" value="ENSMUSP00000034207.7"/>
    <property type="gene ID" value="ENSMUSG00000031757.8"/>
</dbReference>
<dbReference type="GeneID" id="17752"/>
<dbReference type="KEGG" id="mmu:17752"/>
<dbReference type="UCSC" id="uc009mvt.1">
    <property type="organism name" value="mouse"/>
</dbReference>
<dbReference type="AGR" id="MGI:99692"/>
<dbReference type="CTD" id="84560"/>
<dbReference type="MGI" id="MGI:99692">
    <property type="gene designation" value="Mt4"/>
</dbReference>
<dbReference type="VEuPathDB" id="HostDB:ENSMUSG00000031757"/>
<dbReference type="eggNOG" id="KOG4738">
    <property type="taxonomic scope" value="Eukaryota"/>
</dbReference>
<dbReference type="GeneTree" id="ENSGT00950000182967"/>
<dbReference type="HOGENOM" id="CLU_171204_2_0_1"/>
<dbReference type="InParanoid" id="P47945"/>
<dbReference type="OMA" id="DKCGCCP"/>
<dbReference type="PhylomeDB" id="P47945"/>
<dbReference type="TreeFam" id="TF336054"/>
<dbReference type="BioGRID-ORCS" id="17752">
    <property type="hits" value="1 hit in 57 CRISPR screens"/>
</dbReference>
<dbReference type="PRO" id="PR:P47945"/>
<dbReference type="Proteomes" id="UP000000589">
    <property type="component" value="Chromosome 8"/>
</dbReference>
<dbReference type="RNAct" id="P47945">
    <property type="molecule type" value="protein"/>
</dbReference>
<dbReference type="Bgee" id="ENSMUSG00000031757">
    <property type="expression patterns" value="Expressed in tail skin and 52 other cell types or tissues"/>
</dbReference>
<dbReference type="ExpressionAtlas" id="P47945">
    <property type="expression patterns" value="baseline and differential"/>
</dbReference>
<dbReference type="GO" id="GO:0005829">
    <property type="term" value="C:cytosol"/>
    <property type="evidence" value="ECO:0000304"/>
    <property type="project" value="Reactome"/>
</dbReference>
<dbReference type="GO" id="GO:0046872">
    <property type="term" value="F:metal ion binding"/>
    <property type="evidence" value="ECO:0000314"/>
    <property type="project" value="MGI"/>
</dbReference>
<dbReference type="GO" id="GO:0030003">
    <property type="term" value="P:intracellular monoatomic cation homeostasis"/>
    <property type="evidence" value="ECO:0000314"/>
    <property type="project" value="MGI"/>
</dbReference>
<dbReference type="GO" id="GO:0046686">
    <property type="term" value="P:response to cadmium ion"/>
    <property type="evidence" value="ECO:0000266"/>
    <property type="project" value="MGI"/>
</dbReference>
<dbReference type="FunFam" id="4.10.10.10:FF:000001">
    <property type="entry name" value="Metallothionein"/>
    <property type="match status" value="1"/>
</dbReference>
<dbReference type="Gene3D" id="4.10.10.10">
    <property type="entry name" value="Metallothionein Isoform II"/>
    <property type="match status" value="1"/>
</dbReference>
<dbReference type="InterPro" id="IPR017854">
    <property type="entry name" value="Metalthion_dom_sf"/>
</dbReference>
<dbReference type="InterPro" id="IPR023587">
    <property type="entry name" value="Metalthion_dom_sf_vert"/>
</dbReference>
<dbReference type="InterPro" id="IPR000006">
    <property type="entry name" value="Metalthion_vert"/>
</dbReference>
<dbReference type="InterPro" id="IPR018064">
    <property type="entry name" value="Metalthion_vert_metal_BS"/>
</dbReference>
<dbReference type="PANTHER" id="PTHR23299">
    <property type="entry name" value="METALLOTHIONEIN"/>
    <property type="match status" value="1"/>
</dbReference>
<dbReference type="PANTHER" id="PTHR23299:SF12">
    <property type="entry name" value="METALLOTHIONEIN-4"/>
    <property type="match status" value="1"/>
</dbReference>
<dbReference type="Pfam" id="PF00131">
    <property type="entry name" value="Metallothio"/>
    <property type="match status" value="1"/>
</dbReference>
<dbReference type="PRINTS" id="PR00860">
    <property type="entry name" value="MTVERTEBRATE"/>
</dbReference>
<dbReference type="SUPFAM" id="SSF57868">
    <property type="entry name" value="Metallothionein"/>
    <property type="match status" value="1"/>
</dbReference>
<dbReference type="PROSITE" id="PS00203">
    <property type="entry name" value="METALLOTHIONEIN_VRT"/>
    <property type="match status" value="1"/>
</dbReference>
<sequence length="62" mass="6277">MDPGECTCMSGGICICGDNCKCTTCSCKTCRKSCCPCCPPGCAKCARGCICKGGSDKCSCCP</sequence>
<accession>P47945</accession>
<comment type="function">
    <text>Seems to bind zinc and copper. Could play a special role in regulating zinc metabolism during the differentiation of stratified epithelia.</text>
</comment>
<comment type="tissue specificity">
    <text>Expressed exclusively in stratified squamous epithelia associated with oral epithelia, esophagus, upper stomach, tail, footpads and neonatal skin.</text>
</comment>
<comment type="similarity">
    <text evidence="2">Belongs to the metallothionein superfamily. Type 1 family.</text>
</comment>
<name>MT4_MOUSE</name>
<feature type="chain" id="PRO_0000197256" description="Metallothionein-4">
    <location>
        <begin position="1"/>
        <end position="62"/>
    </location>
</feature>
<feature type="binding site" evidence="1">
    <location>
        <position position="6"/>
    </location>
    <ligand>
        <name>a divalent metal cation</name>
        <dbReference type="ChEBI" id="CHEBI:60240"/>
        <label>1</label>
        <note>in cluster B</note>
    </ligand>
</feature>
<feature type="binding site" evidence="1">
    <location>
        <position position="8"/>
    </location>
    <ligand>
        <name>a divalent metal cation</name>
        <dbReference type="ChEBI" id="CHEBI:60240"/>
        <label>1</label>
        <note>in cluster B</note>
    </ligand>
</feature>
<feature type="binding site" evidence="1">
    <location>
        <position position="8"/>
    </location>
    <ligand>
        <name>a divalent metal cation</name>
        <dbReference type="ChEBI" id="CHEBI:60240"/>
        <label>2</label>
        <note>in cluster B</note>
    </ligand>
</feature>
<feature type="binding site" evidence="1">
    <location>
        <position position="14"/>
    </location>
    <ligand>
        <name>a divalent metal cation</name>
        <dbReference type="ChEBI" id="CHEBI:60240"/>
        <label>2</label>
        <note>in cluster B</note>
    </ligand>
</feature>
<feature type="binding site" evidence="1">
    <location>
        <position position="16"/>
    </location>
    <ligand>
        <name>a divalent metal cation</name>
        <dbReference type="ChEBI" id="CHEBI:60240"/>
        <label>2</label>
        <note>in cluster B</note>
    </ligand>
</feature>
<feature type="binding site" evidence="1">
    <location>
        <position position="16"/>
    </location>
    <ligand>
        <name>a divalent metal cation</name>
        <dbReference type="ChEBI" id="CHEBI:60240"/>
        <label>3</label>
        <note>in cluster B</note>
    </ligand>
</feature>
<feature type="binding site" evidence="1">
    <location>
        <position position="20"/>
    </location>
    <ligand>
        <name>a divalent metal cation</name>
        <dbReference type="ChEBI" id="CHEBI:60240"/>
        <label>3</label>
        <note>in cluster B</note>
    </ligand>
</feature>
<feature type="binding site" evidence="1">
    <location>
        <position position="22"/>
    </location>
    <ligand>
        <name>a divalent metal cation</name>
        <dbReference type="ChEBI" id="CHEBI:60240"/>
        <label>1</label>
        <note>in cluster B</note>
    </ligand>
</feature>
<feature type="binding site" evidence="1">
    <location>
        <position position="25"/>
    </location>
    <ligand>
        <name>a divalent metal cation</name>
        <dbReference type="ChEBI" id="CHEBI:60240"/>
        <label>1</label>
        <note>in cluster B</note>
    </ligand>
</feature>
<feature type="binding site" evidence="1">
    <location>
        <position position="25"/>
    </location>
    <ligand>
        <name>a divalent metal cation</name>
        <dbReference type="ChEBI" id="CHEBI:60240"/>
        <label>3</label>
        <note>in cluster B</note>
    </ligand>
</feature>
<feature type="binding site" evidence="1">
    <location>
        <position position="27"/>
    </location>
    <ligand>
        <name>a divalent metal cation</name>
        <dbReference type="ChEBI" id="CHEBI:60240"/>
        <label>2</label>
        <note>in cluster B</note>
    </ligand>
</feature>
<feature type="binding site" evidence="1">
    <location>
        <position position="30"/>
    </location>
    <ligand>
        <name>a divalent metal cation</name>
        <dbReference type="ChEBI" id="CHEBI:60240"/>
        <label>3</label>
        <note>in cluster B</note>
    </ligand>
</feature>
<feature type="binding site" evidence="1">
    <location>
        <position position="34"/>
    </location>
    <ligand>
        <name>a divalent metal cation</name>
        <dbReference type="ChEBI" id="CHEBI:60240"/>
        <label>4</label>
        <note>in cluster A</note>
    </ligand>
</feature>
<feature type="binding site" evidence="1">
    <location>
        <position position="35"/>
    </location>
    <ligand>
        <name>a divalent metal cation</name>
        <dbReference type="ChEBI" id="CHEBI:60240"/>
        <label>4</label>
        <note>in cluster A</note>
    </ligand>
</feature>
<feature type="binding site" evidence="1">
    <location>
        <position position="35"/>
    </location>
    <ligand>
        <name>a divalent metal cation</name>
        <dbReference type="ChEBI" id="CHEBI:60240"/>
        <label>5</label>
        <note>in cluster A</note>
    </ligand>
</feature>
<feature type="binding site" evidence="1">
    <location>
        <position position="37"/>
    </location>
    <ligand>
        <name>a divalent metal cation</name>
        <dbReference type="ChEBI" id="CHEBI:60240"/>
        <label>5</label>
        <note>in cluster A</note>
    </ligand>
</feature>
<feature type="binding site" evidence="1">
    <location>
        <position position="38"/>
    </location>
    <ligand>
        <name>a divalent metal cation</name>
        <dbReference type="ChEBI" id="CHEBI:60240"/>
        <label>5</label>
        <note>in cluster A</note>
    </ligand>
</feature>
<feature type="binding site" evidence="1">
    <location>
        <position position="38"/>
    </location>
    <ligand>
        <name>a divalent metal cation</name>
        <dbReference type="ChEBI" id="CHEBI:60240"/>
        <label>6</label>
        <note>in cluster A</note>
    </ligand>
</feature>
<feature type="binding site" evidence="1">
    <location>
        <position position="42"/>
    </location>
    <ligand>
        <name>a divalent metal cation</name>
        <dbReference type="ChEBI" id="CHEBI:60240"/>
        <label>6</label>
        <note>in cluster A</note>
    </ligand>
</feature>
<feature type="binding site" evidence="1">
    <location>
        <position position="45"/>
    </location>
    <ligand>
        <name>a divalent metal cation</name>
        <dbReference type="ChEBI" id="CHEBI:60240"/>
        <label>4</label>
        <note>in cluster A</note>
    </ligand>
</feature>
<feature type="binding site" evidence="1">
    <location>
        <position position="45"/>
    </location>
    <ligand>
        <name>a divalent metal cation</name>
        <dbReference type="ChEBI" id="CHEBI:60240"/>
        <label>6</label>
        <note>in cluster A</note>
    </ligand>
</feature>
<feature type="binding site" evidence="1">
    <location>
        <position position="49"/>
    </location>
    <ligand>
        <name>a divalent metal cation</name>
        <dbReference type="ChEBI" id="CHEBI:60240"/>
        <label>4</label>
        <note>in cluster A</note>
    </ligand>
</feature>
<feature type="binding site" evidence="1">
    <location>
        <position position="51"/>
    </location>
    <ligand>
        <name>a divalent metal cation</name>
        <dbReference type="ChEBI" id="CHEBI:60240"/>
        <label>5</label>
        <note>in cluster A</note>
    </ligand>
</feature>
<feature type="binding site" evidence="1">
    <location>
        <position position="51"/>
    </location>
    <ligand>
        <name>a divalent metal cation</name>
        <dbReference type="ChEBI" id="CHEBI:60240"/>
        <label>7</label>
        <note>in cluster A</note>
    </ligand>
</feature>
<feature type="binding site" evidence="1">
    <location>
        <position position="58"/>
    </location>
    <ligand>
        <name>a divalent metal cation</name>
        <dbReference type="ChEBI" id="CHEBI:60240"/>
        <label>7</label>
        <note>in cluster A</note>
    </ligand>
</feature>
<feature type="binding site" evidence="1">
    <location>
        <position position="60"/>
    </location>
    <ligand>
        <name>a divalent metal cation</name>
        <dbReference type="ChEBI" id="CHEBI:60240"/>
        <label>7</label>
        <note>in cluster A</note>
    </ligand>
</feature>
<feature type="binding site" evidence="1">
    <location>
        <position position="61"/>
    </location>
    <ligand>
        <name>a divalent metal cation</name>
        <dbReference type="ChEBI" id="CHEBI:60240"/>
        <label>6</label>
        <note>in cluster A</note>
    </ligand>
</feature>
<feature type="binding site" evidence="1">
    <location>
        <position position="61"/>
    </location>
    <ligand>
        <name>a divalent metal cation</name>
        <dbReference type="ChEBI" id="CHEBI:60240"/>
        <label>7</label>
        <note>in cluster A</note>
    </ligand>
</feature>
<keyword id="KW-0186">Copper</keyword>
<keyword id="KW-0479">Metal-binding</keyword>
<keyword id="KW-0480">Metal-thiolate cluster</keyword>
<keyword id="KW-1185">Reference proteome</keyword>
<keyword id="KW-0862">Zinc</keyword>